<protein>
    <recommendedName>
        <fullName evidence="1">Acetyl-coenzyme A carboxylase carboxyl transferase subunit alpha</fullName>
        <shortName evidence="1">ACCase subunit alpha</shortName>
        <shortName evidence="1">Acetyl-CoA carboxylase carboxyltransferase subunit alpha</shortName>
        <ecNumber evidence="1">2.1.3.15</ecNumber>
    </recommendedName>
</protein>
<organism>
    <name type="scientific">Bartonella bacilliformis (strain ATCC 35685 / KC583 / Herrer 020/F12,63)</name>
    <dbReference type="NCBI Taxonomy" id="360095"/>
    <lineage>
        <taxon>Bacteria</taxon>
        <taxon>Pseudomonadati</taxon>
        <taxon>Pseudomonadota</taxon>
        <taxon>Alphaproteobacteria</taxon>
        <taxon>Hyphomicrobiales</taxon>
        <taxon>Bartonellaceae</taxon>
        <taxon>Bartonella</taxon>
    </lineage>
</organism>
<comment type="function">
    <text evidence="1">Component of the acetyl coenzyme A carboxylase (ACC) complex. First, biotin carboxylase catalyzes the carboxylation of biotin on its carrier protein (BCCP) and then the CO(2) group is transferred by the carboxyltransferase to acetyl-CoA to form malonyl-CoA.</text>
</comment>
<comment type="catalytic activity">
    <reaction evidence="1">
        <text>N(6)-carboxybiotinyl-L-lysyl-[protein] + acetyl-CoA = N(6)-biotinyl-L-lysyl-[protein] + malonyl-CoA</text>
        <dbReference type="Rhea" id="RHEA:54728"/>
        <dbReference type="Rhea" id="RHEA-COMP:10505"/>
        <dbReference type="Rhea" id="RHEA-COMP:10506"/>
        <dbReference type="ChEBI" id="CHEBI:57288"/>
        <dbReference type="ChEBI" id="CHEBI:57384"/>
        <dbReference type="ChEBI" id="CHEBI:83144"/>
        <dbReference type="ChEBI" id="CHEBI:83145"/>
        <dbReference type="EC" id="2.1.3.15"/>
    </reaction>
</comment>
<comment type="pathway">
    <text evidence="1">Lipid metabolism; malonyl-CoA biosynthesis; malonyl-CoA from acetyl-CoA: step 1/1.</text>
</comment>
<comment type="subunit">
    <text evidence="1">Acetyl-CoA carboxylase is a heterohexamer composed of biotin carboxyl carrier protein (AccB), biotin carboxylase (AccC) and two subunits each of ACCase subunit alpha (AccA) and ACCase subunit beta (AccD).</text>
</comment>
<comment type="subcellular location">
    <subcellularLocation>
        <location evidence="1">Cytoplasm</location>
    </subcellularLocation>
</comment>
<comment type="similarity">
    <text evidence="1">Belongs to the AccA family.</text>
</comment>
<sequence>MYNYLDFEKPVADLDVQILELKKIAQEKGSLDMSDEIARLEMRSQTALRDLYKKLSPWQKTQVARHPDRPHFMDYSAQLLRDVTPLAGDRKFAEDEAIQAGFARFKGEAIAYIGQEKGHDTQTRLRYNFGSARPEGYRKAVRIMELADRFGLPLLTFVDTAGAYPGVSAEERGQAEAIAQSTAATLRLRVPVVSVIIGEGGSGGAIAIAAANKVYMLEHSIYSVISPEGAASILWRDPARAKDAATNMQITAQDLYRLKIIDGIIPEPLGGAHRQKEAAIEAAGDGIAAALKSMIGKDGETIKQERWDKYLQIGRSLA</sequence>
<evidence type="ECO:0000255" key="1">
    <source>
        <dbReference type="HAMAP-Rule" id="MF_00823"/>
    </source>
</evidence>
<evidence type="ECO:0000255" key="2">
    <source>
        <dbReference type="PROSITE-ProRule" id="PRU01137"/>
    </source>
</evidence>
<accession>A1UQX6</accession>
<feature type="chain" id="PRO_1000062579" description="Acetyl-coenzyme A carboxylase carboxyl transferase subunit alpha">
    <location>
        <begin position="1"/>
        <end position="318"/>
    </location>
</feature>
<feature type="domain" description="CoA carboxyltransferase C-terminal" evidence="2">
    <location>
        <begin position="43"/>
        <end position="293"/>
    </location>
</feature>
<keyword id="KW-0067">ATP-binding</keyword>
<keyword id="KW-0963">Cytoplasm</keyword>
<keyword id="KW-0275">Fatty acid biosynthesis</keyword>
<keyword id="KW-0276">Fatty acid metabolism</keyword>
<keyword id="KW-0444">Lipid biosynthesis</keyword>
<keyword id="KW-0443">Lipid metabolism</keyword>
<keyword id="KW-0547">Nucleotide-binding</keyword>
<keyword id="KW-0808">Transferase</keyword>
<gene>
    <name evidence="1" type="primary">accA</name>
    <name type="ordered locus">BARBAKC583_0040</name>
</gene>
<proteinExistence type="inferred from homology"/>
<dbReference type="EC" id="2.1.3.15" evidence="1"/>
<dbReference type="EMBL" id="CP000524">
    <property type="protein sequence ID" value="ABM44730.1"/>
    <property type="molecule type" value="Genomic_DNA"/>
</dbReference>
<dbReference type="RefSeq" id="WP_005765751.1">
    <property type="nucleotide sequence ID" value="NC_008783.1"/>
</dbReference>
<dbReference type="SMR" id="A1UQX6"/>
<dbReference type="STRING" id="360095.BARBAKC583_0040"/>
<dbReference type="GeneID" id="4684444"/>
<dbReference type="KEGG" id="bbk:BARBAKC583_0040"/>
<dbReference type="PATRIC" id="fig|360095.6.peg.40"/>
<dbReference type="eggNOG" id="COG0825">
    <property type="taxonomic scope" value="Bacteria"/>
</dbReference>
<dbReference type="HOGENOM" id="CLU_015486_0_2_5"/>
<dbReference type="OrthoDB" id="9808023at2"/>
<dbReference type="UniPathway" id="UPA00655">
    <property type="reaction ID" value="UER00711"/>
</dbReference>
<dbReference type="Proteomes" id="UP000000643">
    <property type="component" value="Chromosome"/>
</dbReference>
<dbReference type="GO" id="GO:0009317">
    <property type="term" value="C:acetyl-CoA carboxylase complex"/>
    <property type="evidence" value="ECO:0007669"/>
    <property type="project" value="InterPro"/>
</dbReference>
<dbReference type="GO" id="GO:0003989">
    <property type="term" value="F:acetyl-CoA carboxylase activity"/>
    <property type="evidence" value="ECO:0007669"/>
    <property type="project" value="InterPro"/>
</dbReference>
<dbReference type="GO" id="GO:0005524">
    <property type="term" value="F:ATP binding"/>
    <property type="evidence" value="ECO:0007669"/>
    <property type="project" value="UniProtKB-KW"/>
</dbReference>
<dbReference type="GO" id="GO:0016743">
    <property type="term" value="F:carboxyl- or carbamoyltransferase activity"/>
    <property type="evidence" value="ECO:0007669"/>
    <property type="project" value="UniProtKB-UniRule"/>
</dbReference>
<dbReference type="GO" id="GO:0006633">
    <property type="term" value="P:fatty acid biosynthetic process"/>
    <property type="evidence" value="ECO:0007669"/>
    <property type="project" value="UniProtKB-KW"/>
</dbReference>
<dbReference type="GO" id="GO:2001295">
    <property type="term" value="P:malonyl-CoA biosynthetic process"/>
    <property type="evidence" value="ECO:0007669"/>
    <property type="project" value="UniProtKB-UniRule"/>
</dbReference>
<dbReference type="Gene3D" id="3.90.226.10">
    <property type="entry name" value="2-enoyl-CoA Hydratase, Chain A, domain 1"/>
    <property type="match status" value="1"/>
</dbReference>
<dbReference type="HAMAP" id="MF_00823">
    <property type="entry name" value="AcetylCoA_CT_alpha"/>
    <property type="match status" value="1"/>
</dbReference>
<dbReference type="InterPro" id="IPR001095">
    <property type="entry name" value="Acetyl_CoA_COase_a_su"/>
</dbReference>
<dbReference type="InterPro" id="IPR029045">
    <property type="entry name" value="ClpP/crotonase-like_dom_sf"/>
</dbReference>
<dbReference type="InterPro" id="IPR011763">
    <property type="entry name" value="COA_CT_C"/>
</dbReference>
<dbReference type="NCBIfam" id="TIGR00513">
    <property type="entry name" value="accA"/>
    <property type="match status" value="1"/>
</dbReference>
<dbReference type="NCBIfam" id="NF041504">
    <property type="entry name" value="AccA_sub"/>
    <property type="match status" value="1"/>
</dbReference>
<dbReference type="NCBIfam" id="NF004344">
    <property type="entry name" value="PRK05724.1"/>
    <property type="match status" value="1"/>
</dbReference>
<dbReference type="PANTHER" id="PTHR42853">
    <property type="entry name" value="ACETYL-COENZYME A CARBOXYLASE CARBOXYL TRANSFERASE SUBUNIT ALPHA"/>
    <property type="match status" value="1"/>
</dbReference>
<dbReference type="PANTHER" id="PTHR42853:SF3">
    <property type="entry name" value="ACETYL-COENZYME A CARBOXYLASE CARBOXYL TRANSFERASE SUBUNIT ALPHA, CHLOROPLASTIC"/>
    <property type="match status" value="1"/>
</dbReference>
<dbReference type="Pfam" id="PF03255">
    <property type="entry name" value="ACCA"/>
    <property type="match status" value="1"/>
</dbReference>
<dbReference type="PRINTS" id="PR01069">
    <property type="entry name" value="ACCCTRFRASEA"/>
</dbReference>
<dbReference type="SUPFAM" id="SSF52096">
    <property type="entry name" value="ClpP/crotonase"/>
    <property type="match status" value="1"/>
</dbReference>
<dbReference type="PROSITE" id="PS50989">
    <property type="entry name" value="COA_CT_CTER"/>
    <property type="match status" value="1"/>
</dbReference>
<reference key="1">
    <citation type="submission" date="2006-12" db="EMBL/GenBank/DDBJ databases">
        <authorList>
            <person name="Hendrix L."/>
            <person name="Mohamoud Y."/>
            <person name="Radune D."/>
            <person name="Shvartsbeyn A."/>
            <person name="Daugherty S."/>
            <person name="Dodson R."/>
            <person name="Durkin A.S."/>
            <person name="Harkins D."/>
            <person name="Huot H."/>
            <person name="Kothari S.P."/>
            <person name="Madupu R."/>
            <person name="Li J."/>
            <person name="Nelson W.C."/>
            <person name="Shrivastava S."/>
            <person name="Giglio M.G."/>
            <person name="Haft D."/>
            <person name="Selengut J."/>
            <person name="Fraser-Ligget C."/>
            <person name="Seshadri R."/>
        </authorList>
    </citation>
    <scope>NUCLEOTIDE SEQUENCE [LARGE SCALE GENOMIC DNA]</scope>
    <source>
        <strain>ATCC 35685 / KC583 / Herrer 020/F12,63</strain>
    </source>
</reference>
<name>ACCA_BARBK</name>